<accession>Q8U1S9</accession>
<protein>
    <recommendedName>
        <fullName evidence="6">CRISPR system Cmr endoribonuclease Cmr4</fullName>
        <ecNumber>3.1.-.-</ecNumber>
    </recommendedName>
    <alternativeName>
        <fullName>CRISPR type III-B/RAMP module RAMP protein Cmr4</fullName>
    </alternativeName>
    <alternativeName>
        <fullName>Target RNase Cmr4</fullName>
    </alternativeName>
</protein>
<reference key="1">
    <citation type="journal article" date="1999" name="Genetics">
        <title>Divergence of the hyperthermophilic archaea Pyrococcus furiosus and P. horikoshii inferred from complete genomic sequences.</title>
        <authorList>
            <person name="Maeder D.L."/>
            <person name="Weiss R.B."/>
            <person name="Dunn D.M."/>
            <person name="Cherry J.L."/>
            <person name="Gonzalez J.M."/>
            <person name="DiRuggiero J."/>
            <person name="Robb F.T."/>
        </authorList>
    </citation>
    <scope>NUCLEOTIDE SEQUENCE [LARGE SCALE GENOMIC DNA]</scope>
    <source>
        <strain>ATCC 43587 / DSM 3638 / JCM 8422 / Vc1</strain>
    </source>
</reference>
<reference key="2">
    <citation type="journal article" date="2009" name="Cell">
        <title>RNA-guided RNA cleavage by a CRISPR RNA-Cas protein complex.</title>
        <authorList>
            <person name="Hale C.R."/>
            <person name="Zhao P."/>
            <person name="Olson S."/>
            <person name="Duff M.O."/>
            <person name="Graveley B.R."/>
            <person name="Wells L."/>
            <person name="Terns R.M."/>
            <person name="Terns M.P."/>
        </authorList>
    </citation>
    <scope>IDENTIFICATION BY MASS SPECTROMETRY</scope>
    <scope>FUNCTION IN CMR COMPLEX</scope>
    <scope>SUBCELLULAR LOCATION</scope>
    <scope>SUBUNIT</scope>
    <source>
        <strain>ATCC 43587 / DSM 3638 / JCM 8422 / Vc1</strain>
    </source>
</reference>
<reference key="3">
    <citation type="journal article" date="2013" name="FEBS Lett.">
        <title>Crystal structure of Cmr5 from Pyrococcus furiosus and its functional implications.</title>
        <authorList>
            <person name="Park J.H."/>
            <person name="Sun J."/>
            <person name="Park S.Y."/>
            <person name="Hwang H.J."/>
            <person name="Park M.Y."/>
            <person name="Shin M."/>
            <person name="Kim J.S."/>
        </authorList>
    </citation>
    <scope>INTERACTION WITH CMR5</scope>
    <scope>SUBUNIT</scope>
    <source>
        <strain>ATCC 43587 / DSM 3638 / JCM 8422 / Vc1</strain>
    </source>
</reference>
<reference key="4">
    <citation type="journal article" date="2013" name="Mol. Cell">
        <title>Structure of an RNA silencing complex of the CRISPR-Cas immune system.</title>
        <authorList>
            <person name="Spilman M."/>
            <person name="Cocozaki A."/>
            <person name="Hale C."/>
            <person name="Shao Y."/>
            <person name="Ramia N."/>
            <person name="Terns R."/>
            <person name="Terns M."/>
            <person name="Li H."/>
            <person name="Stagg S."/>
        </authorList>
    </citation>
    <scope>STRUCTURE BY ELECTRON MICROSCOPY (12.0 ANGSTROMS) OF WHOLE CMR COMPLEX WITH TARGET RNA</scope>
    <scope>SUBUNIT</scope>
    <scope>RNA-BINDING</scope>
    <source>
        <strain>ATCC 43587 / DSM 3638 / JCM 8422 / Vc1</strain>
    </source>
</reference>
<reference key="5">
    <citation type="journal article" date="2014" name="Mol. Cell">
        <title>Structural model of a CRISPR RNA-silencing complex reveals the RNA-target cleavage activity in Cmr4.</title>
        <authorList>
            <person name="Benda C."/>
            <person name="Ebert J."/>
            <person name="Scheltema R.A."/>
            <person name="Schiller H.B."/>
            <person name="Baumgaertner M."/>
            <person name="Bonneau F."/>
            <person name="Mann M."/>
            <person name="Conti E."/>
        </authorList>
    </citation>
    <scope>X-RAY CRYSTALLOGRAPHY (2.8 ANGSTROMS)</scope>
    <scope>FUNCTION</scope>
    <scope>INTERACTION WITH CMR2; CMR3; CMR5 AND CMR6</scope>
    <scope>SUBUNIT</scope>
    <scope>MUTAGENESIS OF HIS-15; ASP-26; GLU-227 AND TYR-229</scope>
    <source>
        <strain>ATCC 43587 / DSM 3638 / JCM 8422 / Vc1</strain>
    </source>
</reference>
<gene>
    <name evidence="5" type="primary">cmr4</name>
    <name type="ordered locus">PF1126</name>
</gene>
<feature type="chain" id="PRO_0000418077" description="CRISPR system Cmr endoribonuclease Cmr4">
    <location>
        <begin position="1"/>
        <end position="295"/>
    </location>
</feature>
<feature type="mutagenesis site" description="Significant decrease in cleavage of target RNA in the whole Cmr complex." evidence="4">
    <original>H</original>
    <variation>A</variation>
    <location>
        <position position="15"/>
    </location>
</feature>
<feature type="mutagenesis site" description="Nearly complete loss of cleavage of target RNA in the whole Cmr complex." evidence="4">
    <original>D</original>
    <variation>A</variation>
    <location>
        <position position="26"/>
    </location>
</feature>
<feature type="mutagenesis site" description="Significant decrease in cleavage of target RNA in the whole Cmr complex." evidence="4">
    <original>E</original>
    <variation>A</variation>
    <location>
        <position position="227"/>
    </location>
</feature>
<feature type="mutagenesis site" description="Moderate decrease in cleavage of target RNA in the whole Cmr complex." evidence="4">
    <original>Y</original>
    <variation>A</variation>
    <location>
        <position position="229"/>
    </location>
</feature>
<feature type="strand" evidence="10">
    <location>
        <begin position="3"/>
        <end position="12"/>
    </location>
</feature>
<feature type="turn" evidence="10">
    <location>
        <begin position="33"/>
        <end position="35"/>
    </location>
</feature>
<feature type="strand" evidence="9">
    <location>
        <begin position="38"/>
        <end position="40"/>
    </location>
</feature>
<feature type="helix" evidence="10">
    <location>
        <begin position="42"/>
        <end position="55"/>
    </location>
</feature>
<feature type="helix" evidence="10">
    <location>
        <begin position="61"/>
        <end position="67"/>
    </location>
</feature>
<feature type="strand" evidence="10">
    <location>
        <begin position="82"/>
        <end position="84"/>
    </location>
</feature>
<feature type="strand" evidence="10">
    <location>
        <begin position="87"/>
        <end position="105"/>
    </location>
</feature>
<feature type="helix" evidence="10">
    <location>
        <begin position="107"/>
        <end position="119"/>
    </location>
</feature>
<feature type="strand" evidence="10">
    <location>
        <begin position="133"/>
        <end position="138"/>
    </location>
</feature>
<feature type="turn" evidence="10">
    <location>
        <begin position="140"/>
        <end position="142"/>
    </location>
</feature>
<feature type="strand" evidence="10">
    <location>
        <begin position="145"/>
        <end position="150"/>
    </location>
</feature>
<feature type="strand" evidence="10">
    <location>
        <begin position="153"/>
        <end position="157"/>
    </location>
</feature>
<feature type="helix" evidence="10">
    <location>
        <begin position="164"/>
        <end position="176"/>
    </location>
</feature>
<feature type="helix" evidence="10">
    <location>
        <begin position="178"/>
        <end position="184"/>
    </location>
</feature>
<feature type="strand" evidence="10">
    <location>
        <begin position="187"/>
        <end position="190"/>
    </location>
</feature>
<feature type="helix" evidence="10">
    <location>
        <begin position="193"/>
        <end position="201"/>
    </location>
</feature>
<feature type="strand" evidence="9">
    <location>
        <begin position="203"/>
        <end position="205"/>
    </location>
</feature>
<feature type="strand" evidence="8">
    <location>
        <begin position="228"/>
        <end position="230"/>
    </location>
</feature>
<feature type="strand" evidence="10">
    <location>
        <begin position="235"/>
        <end position="242"/>
    </location>
</feature>
<feature type="helix" evidence="10">
    <location>
        <begin position="248"/>
        <end position="259"/>
    </location>
</feature>
<feature type="turn" evidence="10">
    <location>
        <begin position="260"/>
        <end position="263"/>
    </location>
</feature>
<feature type="strand" evidence="10">
    <location>
        <begin position="265"/>
        <end position="267"/>
    </location>
</feature>
<feature type="turn" evidence="10">
    <location>
        <begin position="272"/>
        <end position="275"/>
    </location>
</feature>
<feature type="strand" evidence="10">
    <location>
        <begin position="277"/>
        <end position="284"/>
    </location>
</feature>
<dbReference type="EC" id="3.1.-.-"/>
<dbReference type="EMBL" id="AE009950">
    <property type="protein sequence ID" value="AAL81250.1"/>
    <property type="molecule type" value="Genomic_DNA"/>
</dbReference>
<dbReference type="RefSeq" id="WP_011012266.1">
    <property type="nucleotide sequence ID" value="NZ_CP023154.1"/>
</dbReference>
<dbReference type="PDB" id="4RDP">
    <property type="method" value="X-ray"/>
    <property type="resolution" value="2.85 A"/>
    <property type="chains" value="A/B=2-295"/>
</dbReference>
<dbReference type="PDB" id="4W8W">
    <property type="method" value="X-ray"/>
    <property type="resolution" value="2.80 A"/>
    <property type="chains" value="A/B/C/D=1-295"/>
</dbReference>
<dbReference type="PDB" id="4WNZ">
    <property type="method" value="X-ray"/>
    <property type="resolution" value="2.80 A"/>
    <property type="chains" value="A/B=1-295"/>
</dbReference>
<dbReference type="PDBsum" id="4RDP"/>
<dbReference type="PDBsum" id="4W8W"/>
<dbReference type="PDBsum" id="4WNZ"/>
<dbReference type="EMDB" id="EMD-5737"/>
<dbReference type="EMDB" id="EMD-5740"/>
<dbReference type="SMR" id="Q8U1S9"/>
<dbReference type="DIP" id="DIP-54367N"/>
<dbReference type="IntAct" id="Q8U1S9">
    <property type="interactions" value="4"/>
</dbReference>
<dbReference type="MINT" id="Q8U1S9"/>
<dbReference type="STRING" id="186497.PF1126"/>
<dbReference type="PaxDb" id="186497-PF1126"/>
<dbReference type="DNASU" id="1468995"/>
<dbReference type="GeneID" id="41712935"/>
<dbReference type="KEGG" id="pfu:PF1126"/>
<dbReference type="PATRIC" id="fig|186497.12.peg.1187"/>
<dbReference type="eggNOG" id="arCOG02657">
    <property type="taxonomic scope" value="Archaea"/>
</dbReference>
<dbReference type="HOGENOM" id="CLU_047795_0_0_2"/>
<dbReference type="OrthoDB" id="44077at2157"/>
<dbReference type="PhylomeDB" id="Q8U1S9"/>
<dbReference type="EvolutionaryTrace" id="Q8U1S9"/>
<dbReference type="Proteomes" id="UP000001013">
    <property type="component" value="Chromosome"/>
</dbReference>
<dbReference type="GO" id="GO:0005737">
    <property type="term" value="C:cytoplasm"/>
    <property type="evidence" value="ECO:0007669"/>
    <property type="project" value="UniProtKB-SubCell"/>
</dbReference>
<dbReference type="GO" id="GO:0004519">
    <property type="term" value="F:endonuclease activity"/>
    <property type="evidence" value="ECO:0007669"/>
    <property type="project" value="UniProtKB-KW"/>
</dbReference>
<dbReference type="GO" id="GO:0003723">
    <property type="term" value="F:RNA binding"/>
    <property type="evidence" value="ECO:0007669"/>
    <property type="project" value="UniProtKB-KW"/>
</dbReference>
<dbReference type="GO" id="GO:0051607">
    <property type="term" value="P:defense response to virus"/>
    <property type="evidence" value="ECO:0007669"/>
    <property type="project" value="UniProtKB-KW"/>
</dbReference>
<dbReference type="CDD" id="cd09682">
    <property type="entry name" value="Cmr4_III-B"/>
    <property type="match status" value="1"/>
</dbReference>
<dbReference type="InterPro" id="IPR013410">
    <property type="entry name" value="CRISPR-assoc_RAMP_Cmr4"/>
</dbReference>
<dbReference type="InterPro" id="IPR005537">
    <property type="entry name" value="RAMP_III_fam"/>
</dbReference>
<dbReference type="NCBIfam" id="TIGR02580">
    <property type="entry name" value="cas_RAMP_Cmr4"/>
    <property type="match status" value="1"/>
</dbReference>
<dbReference type="PANTHER" id="PTHR36700">
    <property type="entry name" value="CRISPR SYSTEM CMR SUBUNIT CMR4"/>
    <property type="match status" value="1"/>
</dbReference>
<dbReference type="PANTHER" id="PTHR36700:SF1">
    <property type="entry name" value="CRISPR SYSTEM CMR SUBUNIT CMR4"/>
    <property type="match status" value="1"/>
</dbReference>
<dbReference type="Pfam" id="PF03787">
    <property type="entry name" value="RAMPs"/>
    <property type="match status" value="1"/>
</dbReference>
<sequence>MKAYLVGLYTLTPTHPGSGTELGVVDQPIQRERHTGFPVIWGQSLKGVLRSYLKLVEKVDEEKINKIFGPPTEKAHEQAGLISVGDAKILFFPVRSLKGVYAYVTSPLVLNRFKRDLELAGVKNFQTEIPELTDTAIASEEITVDNKVILEEFAILIQKDDKGILESVVKAIEQAFGNEMAEKIKGRIAIIPDDVFRDLVELSTEIVARIRINAETGTVETGGLWYEEYIPSDTLFYSLILVTPRAKDNDMALIKEVLGKINGKYLQIGGNETVGKGFVKVTLKEVTNNGGTHAK</sequence>
<keyword id="KW-0002">3D-structure</keyword>
<keyword id="KW-0051">Antiviral defense</keyword>
<keyword id="KW-0963">Cytoplasm</keyword>
<keyword id="KW-0255">Endonuclease</keyword>
<keyword id="KW-0378">Hydrolase</keyword>
<keyword id="KW-0540">Nuclease</keyword>
<keyword id="KW-1185">Reference proteome</keyword>
<keyword id="KW-0694">RNA-binding</keyword>
<proteinExistence type="evidence at protein level"/>
<organism>
    <name type="scientific">Pyrococcus furiosus (strain ATCC 43587 / DSM 3638 / JCM 8422 / Vc1)</name>
    <dbReference type="NCBI Taxonomy" id="186497"/>
    <lineage>
        <taxon>Archaea</taxon>
        <taxon>Methanobacteriati</taxon>
        <taxon>Methanobacteriota</taxon>
        <taxon>Thermococci</taxon>
        <taxon>Thermococcales</taxon>
        <taxon>Thermococcaceae</taxon>
        <taxon>Pyrococcus</taxon>
    </lineage>
</organism>
<comment type="function">
    <text evidence="1 4">CRISPR (clustered regularly interspaced short palindromic repeat), is an adaptive immune system that provides protection against mobile genetic elements (viruses, transposable elements and conjugative plasmids). CRISPR clusters contain sequences complementary to antecedent mobile elements and target invading nucleic acids. CRISPR clusters are transcribed and processed into CRISPR RNA (crRNA), formerly called psiRNA (prokaryotic silencing) in this organism. Part of the Cmr ribonucleoprotein complex which has divalent cation-dependent endoribonuclease activity specific for ssRNA complementary to the crRNA (target RNA), generating 5' hydroxy- and 3' phosphate or 2'-3' cyclic phosphate termini. This is probably the subunit that cleaves the target RNA (PubMed:25280103). Cmr complex does not cleave ssDNA complementary to the crRNA. Cleavage of target RNA is guided by the crRNA; substrate cleavage occurs a fixed distance (14 nt) from the 3' end of the crRNA. In vitro reconstitution shows Cmr1-2 and Cmr5 are not absolutely necessary for target cleavage (PubMed:19945378).</text>
</comment>
<comment type="subunit">
    <text evidence="1 2 3 4">Forms oligomers in isolation (PubMed:23370277). Part of the type III-B Cmr ribonucleoprotein (RNP) complex, an elongated RNP with Cmr2 and Cmr3 as the base, with Cmr4 and Cmr5 forming a helical core along the mature crRNA (39 or 45 nt in length), while the complex is capped by Cmr6 and Cmr1. The 5' end of the crRNA is bound to Cmr2 and Cmr3, while Cmr6 and a Cmr1 subunit (Cmr1-1 or Cmr1-2) cap the 3' end of the crRNA. The target RNA lies anti-parallel to the crRNA, with its 5' end near Cmr1 and Cmr6 and its 3' end near Cmr2 and Cmr3; major target RNA cleavage occurs nears the junction of Cmr1/Cmr6 and Cmr4/Cmr5, with minor cleavage occurring at 6 nt intervals which coincide with the proposed spacing of Cmr4 subunits (PubMed:24119404, PubMed:25280103). Interacts with Cmr5 (PubMed:23370277). Interacts with Cmr2, Cmr3, Cmr5 and Cmr6 (PubMed:25280103).</text>
</comment>
<comment type="interaction">
    <interactant intactId="EBI-2504950">
        <id>Q8U1S9</id>
    </interactant>
    <interactant intactId="EBI-2504964">
        <id>Q8U1T0</id>
        <label>cmr5</label>
    </interactant>
    <organismsDiffer>false</organismsDiffer>
    <experiments>2</experiments>
</comment>
<comment type="subcellular location">
    <subcellularLocation>
        <location evidence="1">Cytoplasm</location>
    </subcellularLocation>
</comment>
<comment type="similarity">
    <text evidence="7">Belongs to the CRISPR system Cmr4 family.</text>
</comment>
<evidence type="ECO:0000269" key="1">
    <source>
    </source>
</evidence>
<evidence type="ECO:0000269" key="2">
    <source>
    </source>
</evidence>
<evidence type="ECO:0000269" key="3">
    <source>
    </source>
</evidence>
<evidence type="ECO:0000269" key="4">
    <source>
    </source>
</evidence>
<evidence type="ECO:0000303" key="5">
    <source>
    </source>
</evidence>
<evidence type="ECO:0000303" key="6">
    <source>
    </source>
</evidence>
<evidence type="ECO:0000305" key="7"/>
<evidence type="ECO:0007829" key="8">
    <source>
        <dbReference type="PDB" id="4RDP"/>
    </source>
</evidence>
<evidence type="ECO:0007829" key="9">
    <source>
        <dbReference type="PDB" id="4W8W"/>
    </source>
</evidence>
<evidence type="ECO:0007829" key="10">
    <source>
        <dbReference type="PDB" id="4WNZ"/>
    </source>
</evidence>
<name>CMR4_PYRFU</name>